<protein>
    <recommendedName>
        <fullName>Growth factor receptor-bound protein 7</fullName>
    </recommendedName>
    <alternativeName>
        <fullName>B47</fullName>
    </alternativeName>
    <alternativeName>
        <fullName>Epidermal growth factor receptor GRB-7</fullName>
    </alternativeName>
    <alternativeName>
        <fullName>GRB7 adapter protein</fullName>
    </alternativeName>
</protein>
<feature type="chain" id="PRO_0000150344" description="Growth factor receptor-bound protein 7">
    <location>
        <begin position="1"/>
        <end position="532"/>
    </location>
</feature>
<feature type="domain" description="Ras-associating" evidence="4">
    <location>
        <begin position="100"/>
        <end position="186"/>
    </location>
</feature>
<feature type="domain" description="PH" evidence="3">
    <location>
        <begin position="229"/>
        <end position="338"/>
    </location>
</feature>
<feature type="domain" description="SH2" evidence="5">
    <location>
        <begin position="431"/>
        <end position="527"/>
    </location>
</feature>
<feature type="region of interest" description="Disordered" evidence="6">
    <location>
        <begin position="1"/>
        <end position="96"/>
    </location>
</feature>
<feature type="compositionally biased region" description="Low complexity" evidence="6">
    <location>
        <begin position="1"/>
        <end position="20"/>
    </location>
</feature>
<feature type="compositionally biased region" description="Pro residues" evidence="6">
    <location>
        <begin position="21"/>
        <end position="34"/>
    </location>
</feature>
<feature type="site" description="Important for lipid binding and for stimulation of cell migration">
    <location>
        <position position="239"/>
    </location>
</feature>
<feature type="site" description="Important for dimerization and for HRAS activation">
    <location>
        <position position="511"/>
    </location>
</feature>
<feature type="modified residue" description="Phosphotyrosine; by FAK1" evidence="12 13">
    <location>
        <position position="188"/>
    </location>
</feature>
<feature type="modified residue" description="Phosphotyrosine; by FAK1" evidence="12 13">
    <location>
        <position position="338"/>
    </location>
</feature>
<feature type="modified residue" description="Phosphoserine" evidence="18">
    <location>
        <position position="361"/>
    </location>
</feature>
<feature type="splice variant" id="VSP_041665" description="In isoform 3." evidence="15">
    <original>M</original>
    <variation>MGKWRPGQGHTTGSVKPLSCSDAM</variation>
    <location>
        <position position="1"/>
    </location>
</feature>
<feature type="splice variant" id="VSP_041666" description="In isoform 4." evidence="15">
    <location>
        <begin position="48"/>
        <end position="81"/>
    </location>
</feature>
<feature type="splice variant" id="VSP_035500" description="In isoform 2." evidence="16">
    <original>IHRTQLWFHGRISREESQRLIGQ</original>
    <variation>CSWSGRVSGTPRALSSLCATCRK</variation>
    <location>
        <begin position="425"/>
        <end position="447"/>
    </location>
</feature>
<feature type="splice variant" id="VSP_035501" description="In isoform 2." evidence="16">
    <location>
        <begin position="448"/>
        <end position="532"/>
    </location>
</feature>
<feature type="mutagenesis site" description="Abolishes Ras activity increase and ERK1/2 phosphorylation." evidence="13">
    <original>Y</original>
    <variation>F</variation>
    <location>
        <position position="188"/>
    </location>
</feature>
<feature type="mutagenesis site" description="Abolishes phosphoinositide binding." evidence="8">
    <original>R</original>
    <variation>L</variation>
    <location>
        <position position="239"/>
    </location>
</feature>
<feature type="mutagenesis site" description="Global loss of tyrosine phosphorylation. Abolishes interaction with FHL2 and HAX1." evidence="11 14">
    <original>Y</original>
    <variation>F</variation>
    <location>
        <position position="259"/>
    </location>
</feature>
<feature type="mutagenesis site" description="Global loss of tyrosine phosphorylation. Abolishes interaction with FHL2 and HAX1." evidence="11 14">
    <original>Y</original>
    <variation>F</variation>
    <location>
        <position position="260"/>
    </location>
</feature>
<feature type="mutagenesis site" description="Global loss of tyrosine phosphorylation. Abolishes interaction with FHL2 and HAX1." evidence="11 14">
    <original>Y</original>
    <variation>F</variation>
    <location>
        <position position="284"/>
    </location>
</feature>
<feature type="mutagenesis site" description="Abolishes Ras activity increase and ERK1/2 phosphorylation." evidence="13">
    <original>Y</original>
    <variation>F</variation>
    <location>
        <position position="338"/>
    </location>
</feature>
<feature type="mutagenesis site" description="Impairs phosphotyrosine binding by SH2 domain.">
    <original>R</original>
    <variation>L</variation>
    <location>
        <position position="458"/>
    </location>
</feature>
<feature type="mutagenesis site" description="Global loss of tyrosine phosphorylation. Abolishes interaction with FHL2 and HAX1." evidence="11 14">
    <original>Y</original>
    <variation>F</variation>
    <location>
        <position position="480"/>
    </location>
</feature>
<feature type="mutagenesis site" description="Global loss of tyrosine phosphorylation. Abolishes interaction with FHL2 and HAX1." evidence="11 14">
    <original>Y</original>
    <variation>F</variation>
    <location>
        <position position="492"/>
    </location>
</feature>
<feature type="mutagenesis site" description="Abolishes dimerization. Abolishes activation of HRAS." evidence="10">
    <original>F</original>
    <variation>R</variation>
    <location>
        <position position="511"/>
    </location>
</feature>
<feature type="sequence conflict" description="In Ref. 1; BAA07827, 2; BAA29059/BAA29060 and 3; AAG25938." evidence="17" ref="1 2 3">
    <original>C</original>
    <variation>W</variation>
    <location>
        <position position="18"/>
    </location>
</feature>
<feature type="sequence conflict" description="In Ref. 5; BAG36998." evidence="17" ref="5">
    <original>V</original>
    <variation>A</variation>
    <location>
        <position position="118"/>
    </location>
</feature>
<feature type="sequence conflict" description="In Ref. 5; BAG54211." evidence="17" ref="5">
    <original>A</original>
    <variation>T</variation>
    <location>
        <position position="120"/>
    </location>
</feature>
<feature type="sequence conflict" description="In Ref. 5; BAG51372." evidence="17" ref="5">
    <original>E</original>
    <variation>G</variation>
    <location>
        <position position="147"/>
    </location>
</feature>
<feature type="sequence conflict" description="In Ref. 5; BAG36998." evidence="17" ref="5">
    <original>V</original>
    <variation>L</variation>
    <location>
        <position position="164"/>
    </location>
</feature>
<feature type="sequence conflict" description="In Ref. 5; BAG36998." evidence="17" ref="5">
    <original>E</original>
    <variation>D</variation>
    <location>
        <position position="510"/>
    </location>
</feature>
<feature type="strand" evidence="20">
    <location>
        <begin position="102"/>
        <end position="108"/>
    </location>
</feature>
<feature type="strand" evidence="20">
    <location>
        <begin position="113"/>
        <end position="118"/>
    </location>
</feature>
<feature type="helix" evidence="20">
    <location>
        <begin position="124"/>
        <end position="132"/>
    </location>
</feature>
<feature type="strand" evidence="20">
    <location>
        <begin position="134"/>
        <end position="136"/>
    </location>
</feature>
<feature type="strand" evidence="20">
    <location>
        <begin position="145"/>
        <end position="148"/>
    </location>
</feature>
<feature type="turn" evidence="20">
    <location>
        <begin position="150"/>
        <end position="152"/>
    </location>
</feature>
<feature type="strand" evidence="20">
    <location>
        <begin position="155"/>
        <end position="158"/>
    </location>
</feature>
<feature type="strand" evidence="20">
    <location>
        <begin position="160"/>
        <end position="162"/>
    </location>
</feature>
<feature type="helix" evidence="20">
    <location>
        <begin position="164"/>
        <end position="168"/>
    </location>
</feature>
<feature type="strand" evidence="20">
    <location>
        <begin position="173"/>
        <end position="175"/>
    </location>
</feature>
<feature type="strand" evidence="20">
    <location>
        <begin position="178"/>
        <end position="181"/>
    </location>
</feature>
<feature type="helix" evidence="22">
    <location>
        <begin position="421"/>
        <end position="424"/>
    </location>
</feature>
<feature type="helix" evidence="25">
    <location>
        <begin position="425"/>
        <end position="428"/>
    </location>
</feature>
<feature type="helix" evidence="21">
    <location>
        <begin position="429"/>
        <end position="431"/>
    </location>
</feature>
<feature type="strand" evidence="22">
    <location>
        <begin position="432"/>
        <end position="436"/>
    </location>
</feature>
<feature type="helix" evidence="23">
    <location>
        <begin position="438"/>
        <end position="447"/>
    </location>
</feature>
<feature type="strand" evidence="23">
    <location>
        <begin position="455"/>
        <end position="459"/>
    </location>
</feature>
<feature type="strand" evidence="24">
    <location>
        <begin position="461"/>
        <end position="463"/>
    </location>
</feature>
<feature type="strand" evidence="23">
    <location>
        <begin position="467"/>
        <end position="473"/>
    </location>
</feature>
<feature type="strand" evidence="23">
    <location>
        <begin position="476"/>
        <end position="487"/>
    </location>
</feature>
<feature type="strand" evidence="23">
    <location>
        <begin position="490"/>
        <end position="496"/>
    </location>
</feature>
<feature type="strand" evidence="23">
    <location>
        <begin position="502"/>
        <end position="504"/>
    </location>
</feature>
<feature type="helix" evidence="23">
    <location>
        <begin position="505"/>
        <end position="512"/>
    </location>
</feature>
<feature type="strand" evidence="19">
    <location>
        <begin position="513"/>
        <end position="515"/>
    </location>
</feature>
<feature type="strand" evidence="23">
    <location>
        <begin position="519"/>
        <end position="521"/>
    </location>
</feature>
<feature type="sequence conflict" description="In Ref. 5; BAG54211." evidence="17" ref="5">
    <original>C</original>
    <variation>R</variation>
    <location sequence="Q14451-3">
        <position position="20"/>
    </location>
</feature>
<gene>
    <name type="primary">GRB7</name>
</gene>
<reference key="1">
    <citation type="journal article" date="1997" name="Biochem. Biophys. Res. Commun.">
        <title>Molecular cloning of human GRB-7 co-amplified with CAB1 and c-ERBB-2 in primary gastric cancer.</title>
        <authorList>
            <person name="Kishi T."/>
            <person name="Sasaki H."/>
            <person name="Akiyama N."/>
            <person name="Ishizuka T."/>
            <person name="Sakamoto H."/>
            <person name="Aizawa S."/>
            <person name="Sugimura T."/>
            <person name="Terada M."/>
        </authorList>
    </citation>
    <scope>NUCLEOTIDE SEQUENCE [MRNA] (ISOFORM 1)</scope>
    <source>
        <tissue>Esophageal carcinoma</tissue>
    </source>
</reference>
<reference key="2">
    <citation type="journal article" date="1998" name="J. Clin. Invest.">
        <title>A novel variant of human Grb7 is associated with invasive esophageal carcinoma.</title>
        <authorList>
            <person name="Tanaka S."/>
            <person name="Mori M."/>
            <person name="Akiyoshi T."/>
            <person name="Tanaka Y."/>
            <person name="Mafune K."/>
            <person name="Wands J.R."/>
            <person name="Sugimachi K."/>
        </authorList>
    </citation>
    <scope>NUCLEOTIDE SEQUENCE [MRNA] (ISOFORMS 1 AND 2)</scope>
</reference>
<reference key="3">
    <citation type="submission" date="2000-06" db="EMBL/GenBank/DDBJ databases">
        <title>Genomic organization and amplification of the human GRB7 gene.</title>
        <authorList>
            <person name="Whittock N.V."/>
            <person name="Eady R.A.J."/>
            <person name="McGrath J.A."/>
        </authorList>
    </citation>
    <scope>NUCLEOTIDE SEQUENCE [GENOMIC DNA]</scope>
</reference>
<reference key="4">
    <citation type="submission" date="2003-05" db="EMBL/GenBank/DDBJ databases">
        <title>Cloning of human full-length CDSs in BD Creator(TM) system donor vector.</title>
        <authorList>
            <person name="Kalnine N."/>
            <person name="Chen X."/>
            <person name="Rolfs A."/>
            <person name="Halleck A."/>
            <person name="Hines L."/>
            <person name="Eisenstein S."/>
            <person name="Koundinya M."/>
            <person name="Raphael J."/>
            <person name="Moreira D."/>
            <person name="Kelley T."/>
            <person name="LaBaer J."/>
            <person name="Lin Y."/>
            <person name="Phelan M."/>
            <person name="Farmer A."/>
        </authorList>
    </citation>
    <scope>NUCLEOTIDE SEQUENCE [LARGE SCALE MRNA] (ISOFORM 1)</scope>
</reference>
<reference key="5">
    <citation type="journal article" date="2004" name="Nat. Genet.">
        <title>Complete sequencing and characterization of 21,243 full-length human cDNAs.</title>
        <authorList>
            <person name="Ota T."/>
            <person name="Suzuki Y."/>
            <person name="Nishikawa T."/>
            <person name="Otsuki T."/>
            <person name="Sugiyama T."/>
            <person name="Irie R."/>
            <person name="Wakamatsu A."/>
            <person name="Hayashi K."/>
            <person name="Sato H."/>
            <person name="Nagai K."/>
            <person name="Kimura K."/>
            <person name="Makita H."/>
            <person name="Sekine M."/>
            <person name="Obayashi M."/>
            <person name="Nishi T."/>
            <person name="Shibahara T."/>
            <person name="Tanaka T."/>
            <person name="Ishii S."/>
            <person name="Yamamoto J."/>
            <person name="Saito K."/>
            <person name="Kawai Y."/>
            <person name="Isono Y."/>
            <person name="Nakamura Y."/>
            <person name="Nagahari K."/>
            <person name="Murakami K."/>
            <person name="Yasuda T."/>
            <person name="Iwayanagi T."/>
            <person name="Wagatsuma M."/>
            <person name="Shiratori A."/>
            <person name="Sudo H."/>
            <person name="Hosoiri T."/>
            <person name="Kaku Y."/>
            <person name="Kodaira H."/>
            <person name="Kondo H."/>
            <person name="Sugawara M."/>
            <person name="Takahashi M."/>
            <person name="Kanda K."/>
            <person name="Yokoi T."/>
            <person name="Furuya T."/>
            <person name="Kikkawa E."/>
            <person name="Omura Y."/>
            <person name="Abe K."/>
            <person name="Kamihara K."/>
            <person name="Katsuta N."/>
            <person name="Sato K."/>
            <person name="Tanikawa M."/>
            <person name="Yamazaki M."/>
            <person name="Ninomiya K."/>
            <person name="Ishibashi T."/>
            <person name="Yamashita H."/>
            <person name="Murakawa K."/>
            <person name="Fujimori K."/>
            <person name="Tanai H."/>
            <person name="Kimata M."/>
            <person name="Watanabe M."/>
            <person name="Hiraoka S."/>
            <person name="Chiba Y."/>
            <person name="Ishida S."/>
            <person name="Ono Y."/>
            <person name="Takiguchi S."/>
            <person name="Watanabe S."/>
            <person name="Yosida M."/>
            <person name="Hotuta T."/>
            <person name="Kusano J."/>
            <person name="Kanehori K."/>
            <person name="Takahashi-Fujii A."/>
            <person name="Hara H."/>
            <person name="Tanase T.-O."/>
            <person name="Nomura Y."/>
            <person name="Togiya S."/>
            <person name="Komai F."/>
            <person name="Hara R."/>
            <person name="Takeuchi K."/>
            <person name="Arita M."/>
            <person name="Imose N."/>
            <person name="Musashino K."/>
            <person name="Yuuki H."/>
            <person name="Oshima A."/>
            <person name="Sasaki N."/>
            <person name="Aotsuka S."/>
            <person name="Yoshikawa Y."/>
            <person name="Matsunawa H."/>
            <person name="Ichihara T."/>
            <person name="Shiohata N."/>
            <person name="Sano S."/>
            <person name="Moriya S."/>
            <person name="Momiyama H."/>
            <person name="Satoh N."/>
            <person name="Takami S."/>
            <person name="Terashima Y."/>
            <person name="Suzuki O."/>
            <person name="Nakagawa S."/>
            <person name="Senoh A."/>
            <person name="Mizoguchi H."/>
            <person name="Goto Y."/>
            <person name="Shimizu F."/>
            <person name="Wakebe H."/>
            <person name="Hishigaki H."/>
            <person name="Watanabe T."/>
            <person name="Sugiyama A."/>
            <person name="Takemoto M."/>
            <person name="Kawakami B."/>
            <person name="Yamazaki M."/>
            <person name="Watanabe K."/>
            <person name="Kumagai A."/>
            <person name="Itakura S."/>
            <person name="Fukuzumi Y."/>
            <person name="Fujimori Y."/>
            <person name="Komiyama M."/>
            <person name="Tashiro H."/>
            <person name="Tanigami A."/>
            <person name="Fujiwara T."/>
            <person name="Ono T."/>
            <person name="Yamada K."/>
            <person name="Fujii Y."/>
            <person name="Ozaki K."/>
            <person name="Hirao M."/>
            <person name="Ohmori Y."/>
            <person name="Kawabata A."/>
            <person name="Hikiji T."/>
            <person name="Kobatake N."/>
            <person name="Inagaki H."/>
            <person name="Ikema Y."/>
            <person name="Okamoto S."/>
            <person name="Okitani R."/>
            <person name="Kawakami T."/>
            <person name="Noguchi S."/>
            <person name="Itoh T."/>
            <person name="Shigeta K."/>
            <person name="Senba T."/>
            <person name="Matsumura K."/>
            <person name="Nakajima Y."/>
            <person name="Mizuno T."/>
            <person name="Morinaga M."/>
            <person name="Sasaki M."/>
            <person name="Togashi T."/>
            <person name="Oyama M."/>
            <person name="Hata H."/>
            <person name="Watanabe M."/>
            <person name="Komatsu T."/>
            <person name="Mizushima-Sugano J."/>
            <person name="Satoh T."/>
            <person name="Shirai Y."/>
            <person name="Takahashi Y."/>
            <person name="Nakagawa K."/>
            <person name="Okumura K."/>
            <person name="Nagase T."/>
            <person name="Nomura N."/>
            <person name="Kikuchi H."/>
            <person name="Masuho Y."/>
            <person name="Yamashita R."/>
            <person name="Nakai K."/>
            <person name="Yada T."/>
            <person name="Nakamura Y."/>
            <person name="Ohara O."/>
            <person name="Isogai T."/>
            <person name="Sugano S."/>
        </authorList>
    </citation>
    <scope>NUCLEOTIDE SEQUENCE [LARGE SCALE MRNA] (ISOFORMS 1; 3 AND 4)</scope>
    <source>
        <tissue>Ovary</tissue>
        <tissue>Prostate</tissue>
        <tissue>Thalamus</tissue>
    </source>
</reference>
<reference key="6">
    <citation type="journal article" date="2006" name="Nature">
        <title>DNA sequence of human chromosome 17 and analysis of rearrangement in the human lineage.</title>
        <authorList>
            <person name="Zody M.C."/>
            <person name="Garber M."/>
            <person name="Adams D.J."/>
            <person name="Sharpe T."/>
            <person name="Harrow J."/>
            <person name="Lupski J.R."/>
            <person name="Nicholson C."/>
            <person name="Searle S.M."/>
            <person name="Wilming L."/>
            <person name="Young S.K."/>
            <person name="Abouelleil A."/>
            <person name="Allen N.R."/>
            <person name="Bi W."/>
            <person name="Bloom T."/>
            <person name="Borowsky M.L."/>
            <person name="Bugalter B.E."/>
            <person name="Butler J."/>
            <person name="Chang J.L."/>
            <person name="Chen C.-K."/>
            <person name="Cook A."/>
            <person name="Corum B."/>
            <person name="Cuomo C.A."/>
            <person name="de Jong P.J."/>
            <person name="DeCaprio D."/>
            <person name="Dewar K."/>
            <person name="FitzGerald M."/>
            <person name="Gilbert J."/>
            <person name="Gibson R."/>
            <person name="Gnerre S."/>
            <person name="Goldstein S."/>
            <person name="Grafham D.V."/>
            <person name="Grocock R."/>
            <person name="Hafez N."/>
            <person name="Hagopian D.S."/>
            <person name="Hart E."/>
            <person name="Norman C.H."/>
            <person name="Humphray S."/>
            <person name="Jaffe D.B."/>
            <person name="Jones M."/>
            <person name="Kamal M."/>
            <person name="Khodiyar V.K."/>
            <person name="LaButti K."/>
            <person name="Laird G."/>
            <person name="Lehoczky J."/>
            <person name="Liu X."/>
            <person name="Lokyitsang T."/>
            <person name="Loveland J."/>
            <person name="Lui A."/>
            <person name="Macdonald P."/>
            <person name="Major J.E."/>
            <person name="Matthews L."/>
            <person name="Mauceli E."/>
            <person name="McCarroll S.A."/>
            <person name="Mihalev A.H."/>
            <person name="Mudge J."/>
            <person name="Nguyen C."/>
            <person name="Nicol R."/>
            <person name="O'Leary S.B."/>
            <person name="Osoegawa K."/>
            <person name="Schwartz D.C."/>
            <person name="Shaw-Smith C."/>
            <person name="Stankiewicz P."/>
            <person name="Steward C."/>
            <person name="Swarbreck D."/>
            <person name="Venkataraman V."/>
            <person name="Whittaker C.A."/>
            <person name="Yang X."/>
            <person name="Zimmer A.R."/>
            <person name="Bradley A."/>
            <person name="Hubbard T."/>
            <person name="Birren B.W."/>
            <person name="Rogers J."/>
            <person name="Lander E.S."/>
            <person name="Nusbaum C."/>
        </authorList>
    </citation>
    <scope>NUCLEOTIDE SEQUENCE [LARGE SCALE GENOMIC DNA]</scope>
</reference>
<reference key="7">
    <citation type="submission" date="2005-07" db="EMBL/GenBank/DDBJ databases">
        <authorList>
            <person name="Mural R.J."/>
            <person name="Istrail S."/>
            <person name="Sutton G.G."/>
            <person name="Florea L."/>
            <person name="Halpern A.L."/>
            <person name="Mobarry C.M."/>
            <person name="Lippert R."/>
            <person name="Walenz B."/>
            <person name="Shatkay H."/>
            <person name="Dew I."/>
            <person name="Miller J.R."/>
            <person name="Flanigan M.J."/>
            <person name="Edwards N.J."/>
            <person name="Bolanos R."/>
            <person name="Fasulo D."/>
            <person name="Halldorsson B.V."/>
            <person name="Hannenhalli S."/>
            <person name="Turner R."/>
            <person name="Yooseph S."/>
            <person name="Lu F."/>
            <person name="Nusskern D.R."/>
            <person name="Shue B.C."/>
            <person name="Zheng X.H."/>
            <person name="Zhong F."/>
            <person name="Delcher A.L."/>
            <person name="Huson D.H."/>
            <person name="Kravitz S.A."/>
            <person name="Mouchard L."/>
            <person name="Reinert K."/>
            <person name="Remington K.A."/>
            <person name="Clark A.G."/>
            <person name="Waterman M.S."/>
            <person name="Eichler E.E."/>
            <person name="Adams M.D."/>
            <person name="Hunkapiller M.W."/>
            <person name="Myers E.W."/>
            <person name="Venter J.C."/>
        </authorList>
    </citation>
    <scope>NUCLEOTIDE SEQUENCE [LARGE SCALE GENOMIC DNA]</scope>
</reference>
<reference key="8">
    <citation type="journal article" date="2004" name="Genome Res.">
        <title>The status, quality, and expansion of the NIH full-length cDNA project: the Mammalian Gene Collection (MGC).</title>
        <authorList>
            <consortium name="The MGC Project Team"/>
        </authorList>
    </citation>
    <scope>NUCLEOTIDE SEQUENCE [LARGE SCALE MRNA] (ISOFORM 1)</scope>
    <source>
        <tissue>Lung</tissue>
    </source>
</reference>
<reference key="9">
    <citation type="journal article" date="1997" name="Cancer Res.">
        <title>Coexpression of Grb7 with epidermal growth factor receptor or Her2/erbB2 in human advanced esophageal carcinoma.</title>
        <authorList>
            <person name="Tanaka S."/>
            <person name="Mori M."/>
            <person name="Akiyoshi T."/>
            <person name="Tanaka Y."/>
            <person name="Mafune K."/>
            <person name="Wands J.R."/>
            <person name="Sugimachi K."/>
        </authorList>
    </citation>
    <scope>NUCLEOTIDE SEQUENCE [MRNA] OF 130-343</scope>
</reference>
<reference key="10">
    <citation type="journal article" date="1998" name="J. Biol. Chem.">
        <title>Analysis of Grb7 recruitment by heregulin-activated erbB receptors reveals a novel target selectivity for erbB3.</title>
        <authorList>
            <person name="Fiddes R.J."/>
            <person name="Campbell D.H."/>
            <person name="Janes P.W."/>
            <person name="Sivertsen S.P."/>
            <person name="Sasaki H."/>
            <person name="Wallasch C."/>
            <person name="Daly R.J."/>
        </authorList>
    </citation>
    <scope>INTERACTION WITH ERBB3 AND ERBB4</scope>
    <scope>SERINE AND THREONINE PHOSPHORYLATION</scope>
</reference>
<reference key="11">
    <citation type="journal article" date="2000" name="FEBS Lett.">
        <title>Interaction of the Grb7 adapter protein with Rnd1, a new member of the Rho family.</title>
        <authorList>
            <person name="Vayssiere B."/>
            <person name="Zalcman G."/>
            <person name="Mahe Y."/>
            <person name="Mirey G."/>
            <person name="Ligensa T."/>
            <person name="Weidner K.M."/>
            <person name="Chardin P."/>
            <person name="Camonis J."/>
        </authorList>
    </citation>
    <scope>INTERACTION WITH RND1</scope>
</reference>
<reference key="12">
    <citation type="journal article" date="2000" name="J. Biol. Chem.">
        <title>Role of Grb7 targeting to focal contacts and its phosphorylation by focal adhesion kinase in regulation of cell migration.</title>
        <authorList>
            <person name="Han D.C."/>
            <person name="Shen T.L."/>
            <person name="Guan J.L."/>
        </authorList>
    </citation>
    <scope>FUNCTION</scope>
    <scope>PHOSPHORYLATION</scope>
    <scope>SUBCELLULAR LOCATION</scope>
</reference>
<reference key="13">
    <citation type="journal article" date="2000" name="Oncogene">
        <title>Evidence for an interaction between the insulin receptor and Grb7. A role for two of its binding domains, PIR and SH2.</title>
        <authorList>
            <person name="Kasus-Jacobi A."/>
            <person name="Bereziat V."/>
            <person name="Perdereau D."/>
            <person name="Girard J."/>
            <person name="Burnol A.F."/>
        </authorList>
    </citation>
    <scope>INTERACTION WITH INSR</scope>
</reference>
<reference key="14">
    <citation type="journal article" date="2002" name="J. Biol. Chem.">
        <title>Association of Grb7 with phosphoinositides and its role in the regulation of cell migration.</title>
        <authorList>
            <person name="Shen T.L."/>
            <person name="Han D.C."/>
            <person name="Guan J.L."/>
        </authorList>
    </citation>
    <scope>FUNCTION</scope>
    <scope>SUBCELLULAR LOCATION</scope>
    <scope>INTERACTION WITH PTK2/FAK1</scope>
    <scope>MUTAGENESIS OF ARG-239</scope>
    <scope>DOMAIN</scope>
</reference>
<reference key="15">
    <citation type="journal article" date="2002" name="J. Biol. Chem.">
        <title>EphB1 associates with Grb7 and regulates cell migration.</title>
        <authorList>
            <person name="Han D.C."/>
            <person name="Shen T.L."/>
            <person name="Miao H."/>
            <person name="Wang B."/>
            <person name="Guan J.L."/>
        </authorList>
    </citation>
    <scope>FUNCTION</scope>
    <scope>PHOSPHORYLATION</scope>
    <scope>INTERACTION WITH EPHB1</scope>
</reference>
<reference key="16">
    <citation type="journal article" date="2004" name="Cell. Mol. Life Sci.">
        <title>Signal transduction via the stem cell factor receptor/c-Kit.</title>
        <authorList>
            <person name="Ronnstrand L."/>
        </authorList>
    </citation>
    <scope>REVIEW ON INTERACTION WITH KIT AND ROLE IN KIT SIGNALING</scope>
</reference>
<reference key="17">
    <citation type="journal article" date="2005" name="Biochem. Biophys. Res. Commun.">
        <title>Signaling by Kit protein-tyrosine kinase--the stem cell factor receptor.</title>
        <authorList>
            <person name="Roskoski R. Jr."/>
        </authorList>
    </citation>
    <scope>REVIEW ON ROLE IN KIT SIGNALING</scope>
</reference>
<reference key="18">
    <citation type="journal article" date="2005" name="Eur. Biophys. J.">
        <title>Grb7-SH2 domain dimerisation is affected by a single point mutation.</title>
        <authorList>
            <person name="Porter C.J."/>
            <person name="Wilce M.C."/>
            <person name="Mackay J.P."/>
            <person name="Leedman P."/>
            <person name="Wilce J.A."/>
        </authorList>
    </citation>
    <scope>SUBUNIT</scope>
    <scope>MUTAGENESIS OF PHE-511</scope>
</reference>
<reference key="19">
    <citation type="journal article" date="2008" name="Proc. Natl. Acad. Sci. U.S.A.">
        <title>A quantitative atlas of mitotic phosphorylation.</title>
        <authorList>
            <person name="Dephoure N."/>
            <person name="Zhou C."/>
            <person name="Villen J."/>
            <person name="Beausoleil S.A."/>
            <person name="Bakalarski C.E."/>
            <person name="Elledge S.J."/>
            <person name="Gygi S.P."/>
        </authorList>
    </citation>
    <scope>PHOSPHORYLATION [LARGE SCALE ANALYSIS] AT SER-361</scope>
    <scope>IDENTIFICATION BY MASS SPECTROMETRY [LARGE SCALE ANALYSIS]</scope>
    <source>
        <tissue>Cervix carcinoma</tissue>
    </source>
</reference>
<reference key="20">
    <citation type="journal article" date="2009" name="J. Biol. Chem.">
        <title>Tyrosine phosphorylation of growth factor receptor-bound protein-7 by focal adhesion kinase in the regulation of cell migration, proliferation, and tumorigenesis.</title>
        <authorList>
            <person name="Chu P.Y."/>
            <person name="Huang L.Y."/>
            <person name="Hsu C.H."/>
            <person name="Liang C.C."/>
            <person name="Guan J.L."/>
            <person name="Hung T.H."/>
            <person name="Shen T.L."/>
        </authorList>
    </citation>
    <scope>PHOSPHORYLATION AT TYR-188 AND TYR-338</scope>
    <scope>INTERACTION WITH PTK2/FAK1</scope>
</reference>
<reference key="21">
    <citation type="journal article" date="2009" name="J. Mol. Recognit.">
        <title>The cell migration protein Grb7 associates with transcriptional regulator FHL2 in a Grb7 phosphorylation-dependent manner.</title>
        <authorList>
            <person name="Siamakpour-Reihani S."/>
            <person name="Argiros H.J."/>
            <person name="Wilmeth L.J."/>
            <person name="Haas L.L."/>
            <person name="Peterson T.A."/>
            <person name="Johnson D.L."/>
            <person name="Shuster C.B."/>
            <person name="Lyons B.A."/>
        </authorList>
    </citation>
    <scope>INTERACTION WITH FHL2</scope>
    <scope>STRUCTURE BY NMR</scope>
    <scope>MUTAGENESIS OF TYR-259; TYR-260; TYR-284; TYR-480 AND TYR-492</scope>
    <scope>SUBCELLULAR LOCATION</scope>
    <scope>TYROSINE PHOSPHORYLATION</scope>
</reference>
<reference key="22">
    <citation type="journal article" date="2010" name="J. Biol. Chem.">
        <title>EGF-induced Grb7 recruits and promotes Ras activity essential for the tumorigenicity of Sk-Br3 breast cancer cells.</title>
        <authorList>
            <person name="Chu P.Y."/>
            <person name="Li T.K."/>
            <person name="Ding S.T."/>
            <person name="Lai I.R."/>
            <person name="Shen T.L."/>
        </authorList>
    </citation>
    <scope>FUNCTION</scope>
    <scope>SUBUNIT</scope>
    <scope>PHOSPHORYLATION AT TYR-188 AND TYR-338</scope>
    <scope>MUTAGENESIS OF TYR-188 AND TYR-338</scope>
</reference>
<reference key="23">
    <citation type="journal article" date="2011" name="J. Mol. Recognit.">
        <title>Grb7 binds to Hax-1 and undergoes an intramolecular domain association that offers a model for Grb7 regulation.</title>
        <authorList>
            <person name="Siamakpour-Reihani S."/>
            <person name="Peterson T.A."/>
            <person name="Bradford A.M."/>
            <person name="Argiros H.J."/>
            <person name="Haas L.L."/>
            <person name="Lor S.N."/>
            <person name="Haulsee Z.M."/>
            <person name="Spuches A.M."/>
            <person name="Johnson D.L."/>
            <person name="Rohrschneider L.R."/>
            <person name="Shuster C.B."/>
            <person name="Lyons B.A."/>
        </authorList>
    </citation>
    <scope>INTERACTION WITH HAX1</scope>
    <scope>MUTAGENESIS OF TYR-259; TYR-260; TYR-284; TYR-480 AND TYR-492</scope>
    <scope>CIRCULAR DICHROISM</scope>
    <scope>TYROSINE PHOSPHORYLATION</scope>
</reference>
<reference key="24">
    <citation type="journal article" date="2003" name="J. Biomol. NMR">
        <title>Solution structure of the human Grb7-SH2 domain/erbB2 peptide complex and structural basis for Grb7 binding to ErbB2.</title>
        <authorList>
            <person name="Ivancic M."/>
            <person name="Daly R.J."/>
            <person name="Lyons B.A."/>
        </authorList>
    </citation>
    <scope>STRUCTURE BY NMR OF 415-532 IN COMPLEX WITH ERBB2</scope>
    <scope>INTERACTION WITH ERBB2</scope>
</reference>
<reference key="25">
    <citation type="submission" date="2004-11" db="PDB data bank">
        <title>Solution structure of the RA domain of human GRB7 protein.</title>
        <authorList>
            <consortium name="RIKEN structural genomics initiative (RSGI)"/>
        </authorList>
    </citation>
    <scope>STRUCTURE BY NMR OF 100-186</scope>
</reference>
<reference key="26">
    <citation type="journal article" date="2007" name="BMC Struct. Biol.">
        <title>Grb7 SH2 domain structure and interactions with a cyclic peptide inhibitor of cancer cell migration and proliferation.</title>
        <authorList>
            <person name="Porter C.J."/>
            <person name="Matthews J.M."/>
            <person name="Mackay J.P."/>
            <person name="Pursglove S.E."/>
            <person name="Schmidberger J.W."/>
            <person name="Leedman P.J."/>
            <person name="Pero S.C."/>
            <person name="Krag D.N."/>
            <person name="Wilce M.C."/>
            <person name="Wilce J.A."/>
        </authorList>
    </citation>
    <scope>X-RAY CRYSTALLOGRAPHY (2.1 ANGSTROMS) OF 415-532</scope>
    <scope>INTERACTION WITH THE SYNTHETIC INHIBITOR G7-18NATE</scope>
    <scope>SUBUNIT</scope>
</reference>
<name>GRB7_HUMAN</name>
<evidence type="ECO:0000250" key="1"/>
<evidence type="ECO:0000250" key="2">
    <source>
        <dbReference type="UniProtKB" id="Q03160"/>
    </source>
</evidence>
<evidence type="ECO:0000255" key="3">
    <source>
        <dbReference type="PROSITE-ProRule" id="PRU00145"/>
    </source>
</evidence>
<evidence type="ECO:0000255" key="4">
    <source>
        <dbReference type="PROSITE-ProRule" id="PRU00166"/>
    </source>
</evidence>
<evidence type="ECO:0000255" key="5">
    <source>
        <dbReference type="PROSITE-ProRule" id="PRU00191"/>
    </source>
</evidence>
<evidence type="ECO:0000256" key="6">
    <source>
        <dbReference type="SAM" id="MobiDB-lite"/>
    </source>
</evidence>
<evidence type="ECO:0000269" key="7">
    <source>
    </source>
</evidence>
<evidence type="ECO:0000269" key="8">
    <source>
    </source>
</evidence>
<evidence type="ECO:0000269" key="9">
    <source>
    </source>
</evidence>
<evidence type="ECO:0000269" key="10">
    <source>
    </source>
</evidence>
<evidence type="ECO:0000269" key="11">
    <source>
    </source>
</evidence>
<evidence type="ECO:0000269" key="12">
    <source>
    </source>
</evidence>
<evidence type="ECO:0000269" key="13">
    <source>
    </source>
</evidence>
<evidence type="ECO:0000269" key="14">
    <source>
    </source>
</evidence>
<evidence type="ECO:0000303" key="15">
    <source>
    </source>
</evidence>
<evidence type="ECO:0000303" key="16">
    <source>
    </source>
</evidence>
<evidence type="ECO:0000305" key="17"/>
<evidence type="ECO:0007744" key="18">
    <source>
    </source>
</evidence>
<evidence type="ECO:0007829" key="19">
    <source>
        <dbReference type="PDB" id="1MW4"/>
    </source>
</evidence>
<evidence type="ECO:0007829" key="20">
    <source>
        <dbReference type="PDB" id="1WGR"/>
    </source>
</evidence>
<evidence type="ECO:0007829" key="21">
    <source>
        <dbReference type="PDB" id="2L4K"/>
    </source>
</evidence>
<evidence type="ECO:0007829" key="22">
    <source>
        <dbReference type="PDB" id="2QMS"/>
    </source>
</evidence>
<evidence type="ECO:0007829" key="23">
    <source>
        <dbReference type="PDB" id="4WWQ"/>
    </source>
</evidence>
<evidence type="ECO:0007829" key="24">
    <source>
        <dbReference type="PDB" id="5U06"/>
    </source>
</evidence>
<evidence type="ECO:0007829" key="25">
    <source>
        <dbReference type="PDB" id="5U1Q"/>
    </source>
</evidence>
<accession>Q14451</accession>
<accession>B2RAV1</accession>
<accession>B3KNL0</accession>
<accession>B3KWP9</accession>
<accession>B7WP75</accession>
<accession>J3KQM4</accession>
<accession>Q53YD3</accession>
<accession>Q92568</accession>
<accession>Q96DF9</accession>
<accession>Q9Y220</accession>
<dbReference type="EMBL" id="D43772">
    <property type="protein sequence ID" value="BAA07827.1"/>
    <property type="molecule type" value="mRNA"/>
</dbReference>
<dbReference type="EMBL" id="AB008789">
    <property type="protein sequence ID" value="BAA29059.1"/>
    <property type="molecule type" value="mRNA"/>
</dbReference>
<dbReference type="EMBL" id="AB008790">
    <property type="protein sequence ID" value="BAA29060.1"/>
    <property type="molecule type" value="mRNA"/>
</dbReference>
<dbReference type="EMBL" id="AF274875">
    <property type="protein sequence ID" value="AAG25938.1"/>
    <property type="molecule type" value="Genomic_DNA"/>
</dbReference>
<dbReference type="EMBL" id="BT006686">
    <property type="protein sequence ID" value="AAP35332.1"/>
    <property type="molecule type" value="mRNA"/>
</dbReference>
<dbReference type="EMBL" id="AK222849">
    <property type="protein sequence ID" value="BAD96569.1"/>
    <property type="molecule type" value="mRNA"/>
</dbReference>
<dbReference type="EMBL" id="AK222870">
    <property type="protein sequence ID" value="BAD96590.1"/>
    <property type="molecule type" value="mRNA"/>
</dbReference>
<dbReference type="EMBL" id="AK290115">
    <property type="protein sequence ID" value="BAF82804.1"/>
    <property type="molecule type" value="mRNA"/>
</dbReference>
<dbReference type="EMBL" id="AK314368">
    <property type="protein sequence ID" value="BAG36998.1"/>
    <property type="molecule type" value="mRNA"/>
</dbReference>
<dbReference type="EMBL" id="AK027729">
    <property type="protein sequence ID" value="BAG51372.1"/>
    <property type="molecule type" value="mRNA"/>
</dbReference>
<dbReference type="EMBL" id="AK125544">
    <property type="protein sequence ID" value="BAG54211.1"/>
    <property type="molecule type" value="mRNA"/>
</dbReference>
<dbReference type="EMBL" id="AC079199">
    <property type="status" value="NOT_ANNOTATED_CDS"/>
    <property type="molecule type" value="Genomic_DNA"/>
</dbReference>
<dbReference type="EMBL" id="CH471152">
    <property type="protein sequence ID" value="EAW60600.1"/>
    <property type="molecule type" value="Genomic_DNA"/>
</dbReference>
<dbReference type="EMBL" id="CH471152">
    <property type="protein sequence ID" value="EAW60601.1"/>
    <property type="molecule type" value="Genomic_DNA"/>
</dbReference>
<dbReference type="EMBL" id="BC006535">
    <property type="protein sequence ID" value="AAH06535.1"/>
    <property type="molecule type" value="mRNA"/>
</dbReference>
<dbReference type="EMBL" id="D87513">
    <property type="protein sequence ID" value="BAA13412.1"/>
    <property type="molecule type" value="mRNA"/>
</dbReference>
<dbReference type="CCDS" id="CCDS11345.1">
    <molecule id="Q14451-1"/>
</dbReference>
<dbReference type="CCDS" id="CCDS56028.1">
    <molecule id="Q14451-3"/>
</dbReference>
<dbReference type="CCDS" id="CCDS82116.1">
    <molecule id="Q14451-2"/>
</dbReference>
<dbReference type="PIR" id="JC5412">
    <property type="entry name" value="JC5412"/>
</dbReference>
<dbReference type="RefSeq" id="NP_001025173.1">
    <molecule id="Q14451-1"/>
    <property type="nucleotide sequence ID" value="NM_001030002.3"/>
</dbReference>
<dbReference type="RefSeq" id="NP_001229371.2">
    <molecule id="Q14451-3"/>
    <property type="nucleotide sequence ID" value="NM_001242442.2"/>
</dbReference>
<dbReference type="RefSeq" id="NP_001229372.1">
    <molecule id="Q14451-1"/>
    <property type="nucleotide sequence ID" value="NM_001242443.2"/>
</dbReference>
<dbReference type="RefSeq" id="NP_001317136.1">
    <molecule id="Q14451-2"/>
    <property type="nucleotide sequence ID" value="NM_001330207.2"/>
</dbReference>
<dbReference type="RefSeq" id="NP_005301.2">
    <molecule id="Q14451-1"/>
    <property type="nucleotide sequence ID" value="NM_005310.5"/>
</dbReference>
<dbReference type="PDB" id="1MW4">
    <property type="method" value="NMR"/>
    <property type="chains" value="A=415-532"/>
</dbReference>
<dbReference type="PDB" id="1WGR">
    <property type="method" value="NMR"/>
    <property type="chains" value="A=100-186"/>
</dbReference>
<dbReference type="PDB" id="2L4K">
    <property type="method" value="NMR"/>
    <property type="chains" value="A=415-532"/>
</dbReference>
<dbReference type="PDB" id="2QMS">
    <property type="method" value="X-ray"/>
    <property type="resolution" value="2.10 A"/>
    <property type="chains" value="A/B/C/D=415-532"/>
</dbReference>
<dbReference type="PDB" id="3PQZ">
    <property type="method" value="X-ray"/>
    <property type="resolution" value="2.41 A"/>
    <property type="chains" value="A/B/C/D=416-532"/>
</dbReference>
<dbReference type="PDB" id="4WWQ">
    <property type="method" value="X-ray"/>
    <property type="resolution" value="1.80 A"/>
    <property type="chains" value="A/B=415-532"/>
</dbReference>
<dbReference type="PDB" id="4X6S">
    <property type="method" value="X-ray"/>
    <property type="resolution" value="2.55 A"/>
    <property type="chains" value="A/B=423-529"/>
</dbReference>
<dbReference type="PDB" id="5D0J">
    <property type="method" value="X-ray"/>
    <property type="resolution" value="2.60 A"/>
    <property type="chains" value="A/B/C/D=415-532"/>
</dbReference>
<dbReference type="PDB" id="5EEL">
    <property type="method" value="X-ray"/>
    <property type="resolution" value="2.47 A"/>
    <property type="chains" value="A/B/C/D/E/F=415-532"/>
</dbReference>
<dbReference type="PDB" id="5EEQ">
    <property type="method" value="X-ray"/>
    <property type="resolution" value="1.60 A"/>
    <property type="chains" value="A/B=415-532"/>
</dbReference>
<dbReference type="PDB" id="5TYI">
    <property type="method" value="X-ray"/>
    <property type="resolution" value="2.15 A"/>
    <property type="chains" value="A/B/C/D=415-532"/>
</dbReference>
<dbReference type="PDB" id="5U06">
    <property type="method" value="X-ray"/>
    <property type="resolution" value="2.10 A"/>
    <property type="chains" value="A/B/C/D=415-532"/>
</dbReference>
<dbReference type="PDB" id="5U1Q">
    <property type="method" value="X-ray"/>
    <property type="resolution" value="2.10 A"/>
    <property type="chains" value="A/B/C/D=415-532"/>
</dbReference>
<dbReference type="PDB" id="7MP3">
    <property type="method" value="X-ray"/>
    <property type="resolution" value="2.55 A"/>
    <property type="chains" value="A/B/C/D=415-532"/>
</dbReference>
<dbReference type="PDBsum" id="1MW4"/>
<dbReference type="PDBsum" id="1WGR"/>
<dbReference type="PDBsum" id="2L4K"/>
<dbReference type="PDBsum" id="2QMS"/>
<dbReference type="PDBsum" id="3PQZ"/>
<dbReference type="PDBsum" id="4WWQ"/>
<dbReference type="PDBsum" id="4X6S"/>
<dbReference type="PDBsum" id="5D0J"/>
<dbReference type="PDBsum" id="5EEL"/>
<dbReference type="PDBsum" id="5EEQ"/>
<dbReference type="PDBsum" id="5TYI"/>
<dbReference type="PDBsum" id="5U06"/>
<dbReference type="PDBsum" id="5U1Q"/>
<dbReference type="PDBsum" id="7MP3"/>
<dbReference type="BMRB" id="Q14451"/>
<dbReference type="SMR" id="Q14451"/>
<dbReference type="BioGRID" id="109143">
    <property type="interactions" value="189"/>
</dbReference>
<dbReference type="CORUM" id="Q14451"/>
<dbReference type="DIP" id="DIP-502N"/>
<dbReference type="FunCoup" id="Q14451">
    <property type="interactions" value="74"/>
</dbReference>
<dbReference type="IntAct" id="Q14451">
    <property type="interactions" value="100"/>
</dbReference>
<dbReference type="MINT" id="Q14451"/>
<dbReference type="STRING" id="9606.ENSP00000403459"/>
<dbReference type="BindingDB" id="Q14451"/>
<dbReference type="ChEMBL" id="CHEMBL1649051"/>
<dbReference type="GlyGen" id="Q14451">
    <property type="glycosylation" value="2 sites, 1 O-linked glycan (1 site)"/>
</dbReference>
<dbReference type="iPTMnet" id="Q14451"/>
<dbReference type="PhosphoSitePlus" id="Q14451"/>
<dbReference type="SwissPalm" id="Q14451"/>
<dbReference type="BioMuta" id="GRB7"/>
<dbReference type="DMDM" id="116242503"/>
<dbReference type="CPTAC" id="CPTAC-148"/>
<dbReference type="CPTAC" id="CPTAC-149"/>
<dbReference type="jPOST" id="Q14451"/>
<dbReference type="MassIVE" id="Q14451"/>
<dbReference type="PaxDb" id="9606-ENSP00000403459"/>
<dbReference type="PeptideAtlas" id="Q14451"/>
<dbReference type="ProteomicsDB" id="59995">
    <molecule id="Q14451-1"/>
</dbReference>
<dbReference type="ProteomicsDB" id="59996">
    <molecule id="Q14451-2"/>
</dbReference>
<dbReference type="ProteomicsDB" id="59997">
    <molecule id="Q14451-3"/>
</dbReference>
<dbReference type="ProteomicsDB" id="59998">
    <molecule id="Q14451-4"/>
</dbReference>
<dbReference type="Antibodypedia" id="3928">
    <property type="antibodies" value="364 antibodies from 37 providers"/>
</dbReference>
<dbReference type="DNASU" id="2886"/>
<dbReference type="Ensembl" id="ENST00000309156.9">
    <molecule id="Q14451-1"/>
    <property type="protein sequence ID" value="ENSP00000310771.4"/>
    <property type="gene ID" value="ENSG00000141738.14"/>
</dbReference>
<dbReference type="Ensembl" id="ENST00000394204.1">
    <molecule id="Q14451-2"/>
    <property type="protein sequence ID" value="ENSP00000377754.1"/>
    <property type="gene ID" value="ENSG00000141738.14"/>
</dbReference>
<dbReference type="Ensembl" id="ENST00000394209.6">
    <molecule id="Q14451-1"/>
    <property type="protein sequence ID" value="ENSP00000377759.2"/>
    <property type="gene ID" value="ENSG00000141738.14"/>
</dbReference>
<dbReference type="Ensembl" id="ENST00000394211.7">
    <molecule id="Q14451-1"/>
    <property type="protein sequence ID" value="ENSP00000377761.3"/>
    <property type="gene ID" value="ENSG00000141738.14"/>
</dbReference>
<dbReference type="Ensembl" id="ENST00000445327.6">
    <molecule id="Q14451-3"/>
    <property type="protein sequence ID" value="ENSP00000403459.2"/>
    <property type="gene ID" value="ENSG00000141738.14"/>
</dbReference>
<dbReference type="GeneID" id="2886"/>
<dbReference type="KEGG" id="hsa:2886"/>
<dbReference type="MANE-Select" id="ENST00000309156.9">
    <property type="protein sequence ID" value="ENSP00000310771.4"/>
    <property type="RefSeq nucleotide sequence ID" value="NM_005310.5"/>
    <property type="RefSeq protein sequence ID" value="NP_005301.2"/>
</dbReference>
<dbReference type="UCSC" id="uc002hsr.4">
    <molecule id="Q14451-1"/>
    <property type="organism name" value="human"/>
</dbReference>
<dbReference type="AGR" id="HGNC:4567"/>
<dbReference type="CTD" id="2886"/>
<dbReference type="DisGeNET" id="2886"/>
<dbReference type="GeneCards" id="GRB7"/>
<dbReference type="HGNC" id="HGNC:4567">
    <property type="gene designation" value="GRB7"/>
</dbReference>
<dbReference type="HPA" id="ENSG00000141738">
    <property type="expression patterns" value="Tissue enhanced (esophagus, kidney)"/>
</dbReference>
<dbReference type="MIM" id="601522">
    <property type="type" value="gene"/>
</dbReference>
<dbReference type="neXtProt" id="NX_Q14451"/>
<dbReference type="OpenTargets" id="ENSG00000141738"/>
<dbReference type="PharmGKB" id="PA28963"/>
<dbReference type="VEuPathDB" id="HostDB:ENSG00000141738"/>
<dbReference type="eggNOG" id="KOG3751">
    <property type="taxonomic scope" value="Eukaryota"/>
</dbReference>
<dbReference type="GeneTree" id="ENSGT00940000158710"/>
<dbReference type="HOGENOM" id="CLU_023207_0_1_1"/>
<dbReference type="InParanoid" id="Q14451"/>
<dbReference type="OMA" id="DHESMVE"/>
<dbReference type="OrthoDB" id="5977126at2759"/>
<dbReference type="PAN-GO" id="Q14451">
    <property type="GO annotations" value="0 GO annotations based on evolutionary models"/>
</dbReference>
<dbReference type="PhylomeDB" id="Q14451"/>
<dbReference type="TreeFam" id="TF317511"/>
<dbReference type="PathwayCommons" id="Q14451"/>
<dbReference type="Reactome" id="R-HSA-1306955">
    <property type="pathway name" value="GRB7 events in ERBB2 signaling"/>
</dbReference>
<dbReference type="Reactome" id="R-HSA-1433557">
    <property type="pathway name" value="Signaling by SCF-KIT"/>
</dbReference>
<dbReference type="Reactome" id="R-HSA-186763">
    <property type="pathway name" value="Downstream signal transduction"/>
</dbReference>
<dbReference type="Reactome" id="R-HSA-210993">
    <property type="pathway name" value="Tie2 Signaling"/>
</dbReference>
<dbReference type="Reactome" id="R-HSA-8853659">
    <property type="pathway name" value="RET signaling"/>
</dbReference>
<dbReference type="Reactome" id="R-HSA-9696273">
    <property type="pathway name" value="RND1 GTPase cycle"/>
</dbReference>
<dbReference type="SignaLink" id="Q14451"/>
<dbReference type="SIGNOR" id="Q14451"/>
<dbReference type="BioGRID-ORCS" id="2886">
    <property type="hits" value="21 hits in 1158 CRISPR screens"/>
</dbReference>
<dbReference type="CD-CODE" id="DEE660B4">
    <property type="entry name" value="Stress granule"/>
</dbReference>
<dbReference type="ChiTaRS" id="GRB7">
    <property type="organism name" value="human"/>
</dbReference>
<dbReference type="EvolutionaryTrace" id="Q14451"/>
<dbReference type="GeneWiki" id="GRB7"/>
<dbReference type="GenomeRNAi" id="2886"/>
<dbReference type="Pharos" id="Q14451">
    <property type="development level" value="Tchem"/>
</dbReference>
<dbReference type="PRO" id="PR:Q14451"/>
<dbReference type="Proteomes" id="UP000005640">
    <property type="component" value="Chromosome 17"/>
</dbReference>
<dbReference type="RNAct" id="Q14451">
    <property type="molecule type" value="protein"/>
</dbReference>
<dbReference type="Bgee" id="ENSG00000141738">
    <property type="expression patterns" value="Expressed in oocyte and 129 other cell types or tissues"/>
</dbReference>
<dbReference type="ExpressionAtlas" id="Q14451">
    <property type="expression patterns" value="baseline and differential"/>
</dbReference>
<dbReference type="GO" id="GO:0042995">
    <property type="term" value="C:cell projection"/>
    <property type="evidence" value="ECO:0007669"/>
    <property type="project" value="UniProtKB-SubCell"/>
</dbReference>
<dbReference type="GO" id="GO:0010494">
    <property type="term" value="C:cytoplasmic stress granule"/>
    <property type="evidence" value="ECO:0000250"/>
    <property type="project" value="UniProtKB"/>
</dbReference>
<dbReference type="GO" id="GO:0005829">
    <property type="term" value="C:cytosol"/>
    <property type="evidence" value="ECO:0000314"/>
    <property type="project" value="UniProtKB"/>
</dbReference>
<dbReference type="GO" id="GO:0005925">
    <property type="term" value="C:focal adhesion"/>
    <property type="evidence" value="ECO:0000314"/>
    <property type="project" value="UniProtKB"/>
</dbReference>
<dbReference type="GO" id="GO:0005886">
    <property type="term" value="C:plasma membrane"/>
    <property type="evidence" value="ECO:0007669"/>
    <property type="project" value="UniProtKB-SubCell"/>
</dbReference>
<dbReference type="GO" id="GO:0042802">
    <property type="term" value="F:identical protein binding"/>
    <property type="evidence" value="ECO:0000353"/>
    <property type="project" value="IntAct"/>
</dbReference>
<dbReference type="GO" id="GO:0035091">
    <property type="term" value="F:phosphatidylinositol binding"/>
    <property type="evidence" value="ECO:0000314"/>
    <property type="project" value="UniProtKB"/>
</dbReference>
<dbReference type="GO" id="GO:0019901">
    <property type="term" value="F:protein kinase binding"/>
    <property type="evidence" value="ECO:0000314"/>
    <property type="project" value="UniProtKB"/>
</dbReference>
<dbReference type="GO" id="GO:0003723">
    <property type="term" value="F:RNA binding"/>
    <property type="evidence" value="ECO:0007669"/>
    <property type="project" value="UniProtKB-KW"/>
</dbReference>
<dbReference type="GO" id="GO:0007173">
    <property type="term" value="P:epidermal growth factor receptor signaling pathway"/>
    <property type="evidence" value="ECO:0000304"/>
    <property type="project" value="ProtInc"/>
</dbReference>
<dbReference type="GO" id="GO:0017148">
    <property type="term" value="P:negative regulation of translation"/>
    <property type="evidence" value="ECO:0000250"/>
    <property type="project" value="UniProtKB"/>
</dbReference>
<dbReference type="GO" id="GO:0030335">
    <property type="term" value="P:positive regulation of cell migration"/>
    <property type="evidence" value="ECO:0000314"/>
    <property type="project" value="UniProtKB"/>
</dbReference>
<dbReference type="GO" id="GO:0034063">
    <property type="term" value="P:stress granule assembly"/>
    <property type="evidence" value="ECO:0000250"/>
    <property type="project" value="UniProtKB"/>
</dbReference>
<dbReference type="CDD" id="cd01259">
    <property type="entry name" value="PH_APBB1IP"/>
    <property type="match status" value="1"/>
</dbReference>
<dbReference type="CDD" id="cd16140">
    <property type="entry name" value="RA_GRB7"/>
    <property type="match status" value="1"/>
</dbReference>
<dbReference type="CDD" id="cd10413">
    <property type="entry name" value="SH2_Grb7"/>
    <property type="match status" value="1"/>
</dbReference>
<dbReference type="FunFam" id="3.30.505.10:FF:000015">
    <property type="entry name" value="Growth factor receptor-bound protein 10 isoform X1"/>
    <property type="match status" value="1"/>
</dbReference>
<dbReference type="FunFam" id="2.30.29.30:FF:000062">
    <property type="entry name" value="growth factor receptor-bound protein 10 isoform X1"/>
    <property type="match status" value="1"/>
</dbReference>
<dbReference type="FunFam" id="3.10.20.90:FF:000056">
    <property type="entry name" value="growth factor receptor-bound protein 10 isoform X1"/>
    <property type="match status" value="1"/>
</dbReference>
<dbReference type="Gene3D" id="3.10.20.90">
    <property type="entry name" value="Phosphatidylinositol 3-kinase Catalytic Subunit, Chain A, domain 1"/>
    <property type="match status" value="1"/>
</dbReference>
<dbReference type="Gene3D" id="2.30.29.30">
    <property type="entry name" value="Pleckstrin-homology domain (PH domain)/Phosphotyrosine-binding domain (PTB)"/>
    <property type="match status" value="1"/>
</dbReference>
<dbReference type="Gene3D" id="3.30.505.10">
    <property type="entry name" value="SH2 domain"/>
    <property type="match status" value="1"/>
</dbReference>
<dbReference type="IDEAL" id="IID00566"/>
<dbReference type="InterPro" id="IPR015042">
    <property type="entry name" value="BPS-dom"/>
</dbReference>
<dbReference type="InterPro" id="IPR039664">
    <property type="entry name" value="GRB/APBB1IP"/>
</dbReference>
<dbReference type="InterPro" id="IPR046986">
    <property type="entry name" value="GRB7_RA"/>
</dbReference>
<dbReference type="InterPro" id="IPR035032">
    <property type="entry name" value="Grb7_SH2"/>
</dbReference>
<dbReference type="InterPro" id="IPR011993">
    <property type="entry name" value="PH-like_dom_sf"/>
</dbReference>
<dbReference type="InterPro" id="IPR039665">
    <property type="entry name" value="PH_APBB1IP"/>
</dbReference>
<dbReference type="InterPro" id="IPR001849">
    <property type="entry name" value="PH_domain"/>
</dbReference>
<dbReference type="InterPro" id="IPR000159">
    <property type="entry name" value="RA_dom"/>
</dbReference>
<dbReference type="InterPro" id="IPR000980">
    <property type="entry name" value="SH2"/>
</dbReference>
<dbReference type="InterPro" id="IPR036860">
    <property type="entry name" value="SH2_dom_sf"/>
</dbReference>
<dbReference type="InterPro" id="IPR029071">
    <property type="entry name" value="Ubiquitin-like_domsf"/>
</dbReference>
<dbReference type="PANTHER" id="PTHR11243">
    <property type="entry name" value="GROWTH FACTOR RECEPTOR-BOUND PROTEIN"/>
    <property type="match status" value="1"/>
</dbReference>
<dbReference type="PANTHER" id="PTHR11243:SF25">
    <property type="entry name" value="GROWTH FACTOR RECEPTOR-BOUND PROTEIN 7"/>
    <property type="match status" value="1"/>
</dbReference>
<dbReference type="Pfam" id="PF08947">
    <property type="entry name" value="BPS"/>
    <property type="match status" value="1"/>
</dbReference>
<dbReference type="Pfam" id="PF00169">
    <property type="entry name" value="PH"/>
    <property type="match status" value="1"/>
</dbReference>
<dbReference type="Pfam" id="PF21989">
    <property type="entry name" value="RA_2"/>
    <property type="match status" value="1"/>
</dbReference>
<dbReference type="Pfam" id="PF00017">
    <property type="entry name" value="SH2"/>
    <property type="match status" value="1"/>
</dbReference>
<dbReference type="PRINTS" id="PR00401">
    <property type="entry name" value="SH2DOMAIN"/>
</dbReference>
<dbReference type="SMART" id="SM00233">
    <property type="entry name" value="PH"/>
    <property type="match status" value="1"/>
</dbReference>
<dbReference type="SMART" id="SM00314">
    <property type="entry name" value="RA"/>
    <property type="match status" value="1"/>
</dbReference>
<dbReference type="SMART" id="SM00252">
    <property type="entry name" value="SH2"/>
    <property type="match status" value="1"/>
</dbReference>
<dbReference type="SUPFAM" id="SSF50729">
    <property type="entry name" value="PH domain-like"/>
    <property type="match status" value="1"/>
</dbReference>
<dbReference type="SUPFAM" id="SSF55550">
    <property type="entry name" value="SH2 domain"/>
    <property type="match status" value="1"/>
</dbReference>
<dbReference type="SUPFAM" id="SSF54236">
    <property type="entry name" value="Ubiquitin-like"/>
    <property type="match status" value="1"/>
</dbReference>
<dbReference type="PROSITE" id="PS50003">
    <property type="entry name" value="PH_DOMAIN"/>
    <property type="match status" value="1"/>
</dbReference>
<dbReference type="PROSITE" id="PS50200">
    <property type="entry name" value="RA"/>
    <property type="match status" value="1"/>
</dbReference>
<dbReference type="PROSITE" id="PS50001">
    <property type="entry name" value="SH2"/>
    <property type="match status" value="1"/>
</dbReference>
<keyword id="KW-0002">3D-structure</keyword>
<keyword id="KW-0025">Alternative splicing</keyword>
<keyword id="KW-0965">Cell junction</keyword>
<keyword id="KW-1003">Cell membrane</keyword>
<keyword id="KW-0966">Cell projection</keyword>
<keyword id="KW-0963">Cytoplasm</keyword>
<keyword id="KW-0446">Lipid-binding</keyword>
<keyword id="KW-0472">Membrane</keyword>
<keyword id="KW-0597">Phosphoprotein</keyword>
<keyword id="KW-1267">Proteomics identification</keyword>
<keyword id="KW-1185">Reference proteome</keyword>
<keyword id="KW-0678">Repressor</keyword>
<keyword id="KW-0694">RNA-binding</keyword>
<keyword id="KW-0727">SH2 domain</keyword>
<proteinExistence type="evidence at protein level"/>
<sequence length="532" mass="59681">MELDLSPPHLSSSPEDLCPAPGTPPGTPRPPDTPLPEEVKRSQPLLIPTTGRKLREEERRATSLPSIPNPFPELCSPPSQSPILGGPSSARGLLPRDASRPHVVKVYSEDGACRSVEVAAGATARHVCEMLVQRAHALSDETWGLVECHPHLALERGLEDHESVVEVQAAWPVGGDSRFVFRKNFAKYELFKSSPHSLFPEKMVSSCLDAHTGISHEDLIQNFLNAGSFPEIQGFLQLRGSGRKLWKRFFCFLRRSGLYYSTKGTSKDPRHLQYVADVNESNVYVVTQGRKLYGMPTDFGFCVKPNKLRNGHKGLRIFCSEDEQSRTCWLAAFRLFKYGVQLYKNYQQAQSRHLHPSCLGSPPLRSASDNTLVAMDFSGHAGRVIENPREALSVALEEAQAWRKKTNHRLSLPMPASGTSLSAAIHRTQLWFHGRISREESQRLIGQQGLVDGLFLVRESQRNPQGFVLSLCHLQKVKHYLILPSEEEGRLYFSMDDGQTRFTDLLQLVEFHQLNRGILPCLLRHCCTRVAL</sequence>
<comment type="function">
    <text evidence="1 7 8 9 13">Adapter protein that interacts with the cytoplasmic domain of numerous receptor kinases and modulates down-stream signaling. Promotes activation of down-stream protein kinases, including STAT3, AKT1, MAPK1 and/or MAPK3. Promotes activation of HRAS. Plays a role in signal transduction in response to EGF. Plays a role in the regulation of cell proliferation and cell migration. Plays a role in the assembly and stability of RNA stress granules. Binds to the 5'UTR of target mRNA molecules and represses translation of target mRNA species, when not phosphorylated. Phosphorylation impairs RNA binding and promotes stress granule disassembly during recovery after cellular stress (By similarity).</text>
</comment>
<comment type="subunit">
    <text evidence="1">Homodimer. Interacts (via SH2 domain) with EGFR, ERBB2, ERBB3 (when phosphorylated), ERBB4 (when phosphorylated), EPHB1, INSR, FGFR1, PDGFRA (tyrosine phosphorylated) and PDGFRB (tyrosine phosphorylated). Interacts with SHC1. Interacts with RND1. Interacts (when tyrosine phosphorylated) with FHL2 and HAX1 (By similarity). Interacts (via SH2 domain) with RET and PTK2/FAK1. Interacts (when not phosphorylated) with ELAVL1. In stressed cells, but not in normal cells, part of a complex that contains at least GRB7, PTK2/FAK1, STAU1, ELAVL1 and TIA1. Interacts (via SH2 domain) with KIT (phosphorylated). Interacts (via SH2 domain) with TEK/TIE2 (tyrosine phosphorylated) (By similarity).</text>
</comment>
<comment type="interaction">
    <interactant intactId="EBI-970191">
        <id>Q14451</id>
    </interactant>
    <interactant intactId="EBI-608057">
        <id>P10275</id>
        <label>AR</label>
    </interactant>
    <organismsDiffer>false</organismsDiffer>
    <experiments>3</experiments>
</comment>
<comment type="interaction">
    <interactant intactId="EBI-970191">
        <id>Q14451</id>
    </interactant>
    <interactant intactId="EBI-80252">
        <id>P54762</id>
        <label>EPHB1</label>
    </interactant>
    <organismsDiffer>false</organismsDiffer>
    <experiments>4</experiments>
</comment>
<comment type="interaction">
    <interactant intactId="EBI-970191">
        <id>Q14451</id>
    </interactant>
    <interactant intactId="EBI-641062">
        <id>P04626</id>
        <label>ERBB2</label>
    </interactant>
    <organismsDiffer>false</organismsDiffer>
    <experiments>5</experiments>
</comment>
<comment type="interaction">
    <interactant intactId="EBI-970191">
        <id>Q14451</id>
    </interactant>
    <interactant intactId="EBI-720706">
        <id>P21860</id>
        <label>ERBB3</label>
    </interactant>
    <organismsDiffer>false</organismsDiffer>
    <experiments>7</experiments>
</comment>
<comment type="interaction">
    <interactant intactId="EBI-970191">
        <id>Q14451</id>
    </interactant>
    <interactant intactId="EBI-970191">
        <id>Q14451</id>
        <label>GRB7</label>
    </interactant>
    <organismsDiffer>false</organismsDiffer>
    <experiments>2</experiments>
</comment>
<comment type="interaction">
    <interactant intactId="EBI-970191">
        <id>Q14451</id>
    </interactant>
    <interactant intactId="EBI-357001">
        <id>O00165</id>
        <label>HAX1</label>
    </interactant>
    <organismsDiffer>false</organismsDiffer>
    <experiments>2</experiments>
</comment>
<comment type="interaction">
    <interactant intactId="EBI-970191">
        <id>Q14451</id>
    </interactant>
    <interactant intactId="EBI-2511344">
        <id>Q8NC69</id>
        <label>KCTD6</label>
    </interactant>
    <organismsDiffer>false</organismsDiffer>
    <experiments>3</experiments>
</comment>
<comment type="interaction">
    <interactant intactId="EBI-970191">
        <id>Q14451</id>
    </interactant>
    <interactant intactId="EBI-1379503">
        <id>P10721</id>
        <label>KIT</label>
    </interactant>
    <organismsDiffer>false</organismsDiffer>
    <experiments>4</experiments>
</comment>
<comment type="interaction">
    <interactant intactId="EBI-970191">
        <id>Q14451</id>
    </interactant>
    <interactant intactId="EBI-10232942">
        <id>Q8IWV1</id>
        <label>LAX1</label>
    </interactant>
    <organismsDiffer>false</organismsDiffer>
    <experiments>4</experiments>
</comment>
<comment type="interaction">
    <interactant intactId="EBI-970191">
        <id>Q14451</id>
    </interactant>
    <interactant intactId="EBI-6963742">
        <id>Q5SQ64</id>
        <label>LY6G6F</label>
    </interactant>
    <organismsDiffer>false</organismsDiffer>
    <experiments>2</experiments>
</comment>
<comment type="interaction">
    <interactant intactId="EBI-970191">
        <id>Q14451</id>
    </interactant>
    <interactant intactId="EBI-3867416">
        <id>Q8TAK6</id>
        <label>OLIG1</label>
    </interactant>
    <organismsDiffer>false</organismsDiffer>
    <experiments>3</experiments>
</comment>
<comment type="interaction">
    <interactant intactId="EBI-970191">
        <id>Q14451</id>
    </interactant>
    <interactant intactId="EBI-641237">
        <id>P09619</id>
        <label>PDGFRB</label>
    </interactant>
    <organismsDiffer>false</organismsDiffer>
    <experiments>4</experiments>
</comment>
<comment type="interaction">
    <interactant intactId="EBI-970191">
        <id>Q14451</id>
    </interactant>
    <interactant intactId="EBI-702142">
        <id>Q05397</id>
        <label>PTK2</label>
    </interactant>
    <organismsDiffer>false</organismsDiffer>
    <experiments>3</experiments>
</comment>
<comment type="interaction">
    <interactant intactId="EBI-970191">
        <id>Q14451</id>
    </interactant>
    <interactant intactId="EBI-448618">
        <id>Q92730</id>
        <label>RND1</label>
    </interactant>
    <organismsDiffer>false</organismsDiffer>
    <experiments>4</experiments>
</comment>
<comment type="interaction">
    <interactant intactId="EBI-970191">
        <id>Q14451</id>
    </interactant>
    <interactant intactId="EBI-2341518">
        <id>Q9NQ86</id>
        <label>TRIM36</label>
    </interactant>
    <organismsDiffer>false</organismsDiffer>
    <experiments>3</experiments>
</comment>
<comment type="interaction">
    <interactant intactId="EBI-970191">
        <id>Q14451</id>
    </interactant>
    <interactant intactId="EBI-397403">
        <id>P62157</id>
        <label>CALM</label>
    </interactant>
    <organismsDiffer>true</organismsDiffer>
    <experiments>2</experiments>
</comment>
<comment type="interaction">
    <interactant intactId="EBI-970191">
        <id>Q14451</id>
    </interactant>
    <interactant intactId="EBI-397530">
        <id>P62161</id>
        <label>Calm3</label>
    </interactant>
    <organismsDiffer>true</organismsDiffer>
    <experiments>9</experiments>
</comment>
<comment type="interaction">
    <interactant intactId="EBI-11991632">
        <id>Q14451-3</id>
    </interactant>
    <interactant intactId="EBI-1042699">
        <id>Q8IUR6</id>
        <label>CREBRF</label>
    </interactant>
    <organismsDiffer>false</organismsDiffer>
    <experiments>3</experiments>
</comment>
<comment type="interaction">
    <interactant intactId="EBI-11991632">
        <id>Q14451-3</id>
    </interactant>
    <interactant intactId="EBI-11986315">
        <id>Q9H5Z6-2</id>
        <label>FAM124B</label>
    </interactant>
    <organismsDiffer>false</organismsDiffer>
    <experiments>3</experiments>
</comment>
<comment type="interaction">
    <interactant intactId="EBI-11991632">
        <id>Q14451-3</id>
    </interactant>
    <interactant intactId="EBI-11977403">
        <id>A0A0C3SFZ9</id>
        <label>FCHO1</label>
    </interactant>
    <organismsDiffer>false</organismsDiffer>
    <experiments>3</experiments>
</comment>
<comment type="interaction">
    <interactant intactId="EBI-11991632">
        <id>Q14451-3</id>
    </interactant>
    <interactant intactId="EBI-2511344">
        <id>Q8NC69</id>
        <label>KCTD6</label>
    </interactant>
    <organismsDiffer>false</organismsDiffer>
    <experiments>3</experiments>
</comment>
<comment type="interaction">
    <interactant intactId="EBI-11991632">
        <id>Q14451-3</id>
    </interactant>
    <interactant intactId="EBI-12327415">
        <id>Q8IWV1-3</id>
        <label>LAX1</label>
    </interactant>
    <organismsDiffer>false</organismsDiffer>
    <experiments>3</experiments>
</comment>
<comment type="interaction">
    <interactant intactId="EBI-11991632">
        <id>Q14451-3</id>
    </interactant>
    <interactant intactId="EBI-79165">
        <id>Q9NRD5</id>
        <label>PICK1</label>
    </interactant>
    <organismsDiffer>false</organismsDiffer>
    <experiments>3</experiments>
</comment>
<comment type="interaction">
    <interactant intactId="EBI-11991632">
        <id>Q14451-3</id>
    </interactant>
    <interactant intactId="EBI-745680">
        <id>Q96MF2</id>
        <label>STAC3</label>
    </interactant>
    <organismsDiffer>false</organismsDiffer>
    <experiments>3</experiments>
</comment>
<comment type="interaction">
    <interactant intactId="EBI-11991632">
        <id>Q14451-3</id>
    </interactant>
    <interactant intactId="EBI-11952764">
        <id>Q99081-3</id>
        <label>TCF12</label>
    </interactant>
    <organismsDiffer>false</organismsDiffer>
    <experiments>3</experiments>
</comment>
<comment type="interaction">
    <interactant intactId="EBI-11991632">
        <id>Q14451-3</id>
    </interactant>
    <interactant intactId="EBI-12027348">
        <id>O43548</id>
        <label>TGM5</label>
    </interactant>
    <organismsDiffer>false</organismsDiffer>
    <experiments>3</experiments>
</comment>
<comment type="interaction">
    <interactant intactId="EBI-11991632">
        <id>Q14451-3</id>
    </interactant>
    <interactant intactId="EBI-2129899">
        <id>Q96BQ3</id>
        <label>TRIM43</label>
    </interactant>
    <organismsDiffer>false</organismsDiffer>
    <experiments>3</experiments>
</comment>
<comment type="interaction">
    <interactant intactId="EBI-11991632">
        <id>Q14451-3</id>
    </interactant>
    <interactant intactId="EBI-743272">
        <id>O75604</id>
        <label>USP2</label>
    </interactant>
    <organismsDiffer>false</organismsDiffer>
    <experiments>3</experiments>
</comment>
<comment type="subcellular location">
    <subcellularLocation>
        <location evidence="7 8 11">Cytoplasm</location>
    </subcellularLocation>
    <subcellularLocation>
        <location evidence="7 8">Cell junction</location>
        <location evidence="7 8">Focal adhesion</location>
    </subcellularLocation>
    <subcellularLocation>
        <location>Cell membrane</location>
        <topology>Peripheral membrane protein</topology>
        <orientation evidence="7 8 11">Cytoplasmic side</orientation>
    </subcellularLocation>
    <subcellularLocation>
        <location evidence="2">Cytoplasmic granule</location>
    </subcellularLocation>
    <subcellularLocation>
        <location evidence="11">Cell projection</location>
    </subcellularLocation>
    <text evidence="2">Predominantly cytoplasmic. Detected in stress granules, where mRNA is stored under stress conditions.</text>
</comment>
<comment type="alternative products">
    <event type="alternative splicing"/>
    <isoform>
        <id>Q14451-1</id>
        <name>1</name>
        <sequence type="displayed"/>
    </isoform>
    <isoform>
        <id>Q14451-2</id>
        <name>2</name>
        <name>Grb7V</name>
        <sequence type="described" ref="VSP_035500 VSP_035501"/>
    </isoform>
    <isoform>
        <id>Q14451-3</id>
        <name>3</name>
        <sequence type="described" ref="VSP_041665"/>
    </isoform>
    <isoform>
        <id>Q14451-4</id>
        <name>4</name>
        <sequence type="described" ref="VSP_041666"/>
    </isoform>
    <text>At least 2 isoforms are produced.</text>
</comment>
<comment type="domain">
    <text evidence="8">The PH domain mediates interaction with membranes containing phosphoinositides.</text>
</comment>
<comment type="PTM">
    <text evidence="1 7 9 12 13">Phosphorylated on serine and threonine residues in response to heregulin. Phosphorylated on tyrosine residues by TEK/TIE2. Phosphorylated on tyrosine residues in response to NTN1 signaling. Phosphorylation promotes stress granule disassembly during recovery after cellular stress (By similarity). Phosphorylated on tyrosine residues by PTK2/FAK1, and possibly also other kinases. Phosphorylation is enhanced by activation of receptor kinases. Tyrosine phosphorylation is essential for activation of down-stream protein kinases.</text>
</comment>
<comment type="similarity">
    <text evidence="17">Belongs to the GRB7/10/14 family.</text>
</comment>
<organism>
    <name type="scientific">Homo sapiens</name>
    <name type="common">Human</name>
    <dbReference type="NCBI Taxonomy" id="9606"/>
    <lineage>
        <taxon>Eukaryota</taxon>
        <taxon>Metazoa</taxon>
        <taxon>Chordata</taxon>
        <taxon>Craniata</taxon>
        <taxon>Vertebrata</taxon>
        <taxon>Euteleostomi</taxon>
        <taxon>Mammalia</taxon>
        <taxon>Eutheria</taxon>
        <taxon>Euarchontoglires</taxon>
        <taxon>Primates</taxon>
        <taxon>Haplorrhini</taxon>
        <taxon>Catarrhini</taxon>
        <taxon>Hominidae</taxon>
        <taxon>Homo</taxon>
    </lineage>
</organism>